<organism>
    <name type="scientific">Shigella boydii serotype 4 (strain Sb227)</name>
    <dbReference type="NCBI Taxonomy" id="300268"/>
    <lineage>
        <taxon>Bacteria</taxon>
        <taxon>Pseudomonadati</taxon>
        <taxon>Pseudomonadota</taxon>
        <taxon>Gammaproteobacteria</taxon>
        <taxon>Enterobacterales</taxon>
        <taxon>Enterobacteriaceae</taxon>
        <taxon>Shigella</taxon>
    </lineage>
</organism>
<keyword id="KW-0274">FAD</keyword>
<keyword id="KW-0285">Flavoprotein</keyword>
<keyword id="KW-0560">Oxidoreductase</keyword>
<name>DADA_SHIBS</name>
<gene>
    <name evidence="1" type="primary">dadA</name>
    <name type="ordered locus">SBO_1883</name>
</gene>
<dbReference type="EC" id="1.4.99.-" evidence="1"/>
<dbReference type="EMBL" id="CP000036">
    <property type="protein sequence ID" value="ABB66478.1"/>
    <property type="molecule type" value="Genomic_DNA"/>
</dbReference>
<dbReference type="RefSeq" id="WP_001266897.1">
    <property type="nucleotide sequence ID" value="NC_007613.1"/>
</dbReference>
<dbReference type="SMR" id="Q31ZN0"/>
<dbReference type="KEGG" id="sbo:SBO_1883"/>
<dbReference type="HOGENOM" id="CLU_007884_9_2_6"/>
<dbReference type="UniPathway" id="UPA00043">
    <property type="reaction ID" value="UER00498"/>
</dbReference>
<dbReference type="Proteomes" id="UP000007067">
    <property type="component" value="Chromosome"/>
</dbReference>
<dbReference type="GO" id="GO:0005737">
    <property type="term" value="C:cytoplasm"/>
    <property type="evidence" value="ECO:0007669"/>
    <property type="project" value="TreeGrafter"/>
</dbReference>
<dbReference type="GO" id="GO:0005886">
    <property type="term" value="C:plasma membrane"/>
    <property type="evidence" value="ECO:0007669"/>
    <property type="project" value="TreeGrafter"/>
</dbReference>
<dbReference type="GO" id="GO:0008718">
    <property type="term" value="F:D-amino-acid dehydrogenase activity"/>
    <property type="evidence" value="ECO:0007669"/>
    <property type="project" value="UniProtKB-UniRule"/>
</dbReference>
<dbReference type="GO" id="GO:0055130">
    <property type="term" value="P:D-alanine catabolic process"/>
    <property type="evidence" value="ECO:0007669"/>
    <property type="project" value="UniProtKB-UniPathway"/>
</dbReference>
<dbReference type="FunFam" id="3.50.50.60:FF:000020">
    <property type="entry name" value="D-amino acid dehydrogenase"/>
    <property type="match status" value="1"/>
</dbReference>
<dbReference type="Gene3D" id="3.30.9.10">
    <property type="entry name" value="D-Amino Acid Oxidase, subunit A, domain 2"/>
    <property type="match status" value="1"/>
</dbReference>
<dbReference type="Gene3D" id="3.50.50.60">
    <property type="entry name" value="FAD/NAD(P)-binding domain"/>
    <property type="match status" value="2"/>
</dbReference>
<dbReference type="HAMAP" id="MF_01202">
    <property type="entry name" value="DadA"/>
    <property type="match status" value="1"/>
</dbReference>
<dbReference type="InterPro" id="IPR023080">
    <property type="entry name" value="DadA"/>
</dbReference>
<dbReference type="InterPro" id="IPR006076">
    <property type="entry name" value="FAD-dep_OxRdtase"/>
</dbReference>
<dbReference type="InterPro" id="IPR036188">
    <property type="entry name" value="FAD/NAD-bd_sf"/>
</dbReference>
<dbReference type="NCBIfam" id="NF001933">
    <property type="entry name" value="PRK00711.1"/>
    <property type="match status" value="1"/>
</dbReference>
<dbReference type="PANTHER" id="PTHR13847:SF280">
    <property type="entry name" value="D-AMINO ACID DEHYDROGENASE"/>
    <property type="match status" value="1"/>
</dbReference>
<dbReference type="PANTHER" id="PTHR13847">
    <property type="entry name" value="SARCOSINE DEHYDROGENASE-RELATED"/>
    <property type="match status" value="1"/>
</dbReference>
<dbReference type="Pfam" id="PF01266">
    <property type="entry name" value="DAO"/>
    <property type="match status" value="1"/>
</dbReference>
<dbReference type="SUPFAM" id="SSF54373">
    <property type="entry name" value="FAD-linked reductases, C-terminal domain"/>
    <property type="match status" value="1"/>
</dbReference>
<dbReference type="SUPFAM" id="SSF51905">
    <property type="entry name" value="FAD/NAD(P)-binding domain"/>
    <property type="match status" value="1"/>
</dbReference>
<sequence>MRVVILGSGVVGVASAWYLNQAGHEVTVIDREPGAALETSAANAGQISPGYAAPWAAPGVPLKAIKWMFQRHAPLAVRLDGTQFQLKWMWQMLRNCDTSHYMENKGRMVRLAEYSRDCLKALRAETNIQYEGRQGGTLQLFRTEQQYENATRDIAVLEDAGVPYQLLESSRLAEVDPALAEVAHKLTGGLQLPNDETGDCQLFTQNLARMAEQAGVKFRFNTPVDQLLCDGEQIYGVKFGDEVIKADAYVMAFGSYSTAMLKGIVDIPVYPLKGYSLTIPIAQEDGAPVSTILDETYKIAITRFDNRIRVGGMAEIVGFNTELLQPRRETLEMVVRDLYPRGGHVEQATFWTGLRPMTPDGTPVVGSTRFKNLWLNTGHGTLGWTMACGSGQLLSDLLSGRTPAIPYEDLSVARYSRGFTPSRPGHLHGAHS</sequence>
<proteinExistence type="inferred from homology"/>
<feature type="chain" id="PRO_1000066116" description="D-amino acid dehydrogenase">
    <location>
        <begin position="1"/>
        <end position="432"/>
    </location>
</feature>
<feature type="binding site" evidence="1">
    <location>
        <begin position="3"/>
        <end position="17"/>
    </location>
    <ligand>
        <name>FAD</name>
        <dbReference type="ChEBI" id="CHEBI:57692"/>
    </ligand>
</feature>
<evidence type="ECO:0000255" key="1">
    <source>
        <dbReference type="HAMAP-Rule" id="MF_01202"/>
    </source>
</evidence>
<accession>Q31ZN0</accession>
<comment type="function">
    <text evidence="1">Oxidative deamination of D-amino acids.</text>
</comment>
<comment type="catalytic activity">
    <reaction evidence="1">
        <text>a D-alpha-amino acid + A + H2O = a 2-oxocarboxylate + AH2 + NH4(+)</text>
        <dbReference type="Rhea" id="RHEA:18125"/>
        <dbReference type="ChEBI" id="CHEBI:13193"/>
        <dbReference type="ChEBI" id="CHEBI:15377"/>
        <dbReference type="ChEBI" id="CHEBI:17499"/>
        <dbReference type="ChEBI" id="CHEBI:28938"/>
        <dbReference type="ChEBI" id="CHEBI:35179"/>
        <dbReference type="ChEBI" id="CHEBI:59871"/>
    </reaction>
</comment>
<comment type="cofactor">
    <cofactor evidence="1">
        <name>FAD</name>
        <dbReference type="ChEBI" id="CHEBI:57692"/>
    </cofactor>
</comment>
<comment type="pathway">
    <text>Amino-acid degradation; D-alanine degradation; NH(3) and pyruvate from D-alanine: step 1/1.</text>
</comment>
<comment type="similarity">
    <text evidence="1">Belongs to the DadA oxidoreductase family.</text>
</comment>
<reference key="1">
    <citation type="journal article" date="2005" name="Nucleic Acids Res.">
        <title>Genome dynamics and diversity of Shigella species, the etiologic agents of bacillary dysentery.</title>
        <authorList>
            <person name="Yang F."/>
            <person name="Yang J."/>
            <person name="Zhang X."/>
            <person name="Chen L."/>
            <person name="Jiang Y."/>
            <person name="Yan Y."/>
            <person name="Tang X."/>
            <person name="Wang J."/>
            <person name="Xiong Z."/>
            <person name="Dong J."/>
            <person name="Xue Y."/>
            <person name="Zhu Y."/>
            <person name="Xu X."/>
            <person name="Sun L."/>
            <person name="Chen S."/>
            <person name="Nie H."/>
            <person name="Peng J."/>
            <person name="Xu J."/>
            <person name="Wang Y."/>
            <person name="Yuan Z."/>
            <person name="Wen Y."/>
            <person name="Yao Z."/>
            <person name="Shen Y."/>
            <person name="Qiang B."/>
            <person name="Hou Y."/>
            <person name="Yu J."/>
            <person name="Jin Q."/>
        </authorList>
    </citation>
    <scope>NUCLEOTIDE SEQUENCE [LARGE SCALE GENOMIC DNA]</scope>
    <source>
        <strain>Sb227</strain>
    </source>
</reference>
<protein>
    <recommendedName>
        <fullName evidence="1">D-amino acid dehydrogenase</fullName>
        <ecNumber evidence="1">1.4.99.-</ecNumber>
    </recommendedName>
</protein>